<protein>
    <recommendedName>
        <fullName evidence="1">Met repressor</fullName>
    </recommendedName>
    <alternativeName>
        <fullName evidence="1">Met regulon regulatory protein MetJ</fullName>
    </alternativeName>
</protein>
<proteinExistence type="inferred from homology"/>
<name>METJ_ECOBW</name>
<gene>
    <name evidence="1" type="primary">metJ</name>
    <name type="ordered locus">BWG_3607</name>
</gene>
<accession>C5A0A5</accession>
<organism>
    <name type="scientific">Escherichia coli (strain K12 / MC4100 / BW2952)</name>
    <dbReference type="NCBI Taxonomy" id="595496"/>
    <lineage>
        <taxon>Bacteria</taxon>
        <taxon>Pseudomonadati</taxon>
        <taxon>Pseudomonadota</taxon>
        <taxon>Gammaproteobacteria</taxon>
        <taxon>Enterobacterales</taxon>
        <taxon>Enterobacteriaceae</taxon>
        <taxon>Escherichia</taxon>
    </lineage>
</organism>
<evidence type="ECO:0000255" key="1">
    <source>
        <dbReference type="HAMAP-Rule" id="MF_00744"/>
    </source>
</evidence>
<feature type="chain" id="PRO_1000212834" description="Met repressor">
    <location>
        <begin position="1"/>
        <end position="105"/>
    </location>
</feature>
<reference key="1">
    <citation type="journal article" date="2009" name="J. Bacteriol.">
        <title>Genomic sequencing reveals regulatory mutations and recombinational events in the widely used MC4100 lineage of Escherichia coli K-12.</title>
        <authorList>
            <person name="Ferenci T."/>
            <person name="Zhou Z."/>
            <person name="Betteridge T."/>
            <person name="Ren Y."/>
            <person name="Liu Y."/>
            <person name="Feng L."/>
            <person name="Reeves P.R."/>
            <person name="Wang L."/>
        </authorList>
    </citation>
    <scope>NUCLEOTIDE SEQUENCE [LARGE SCALE GENOMIC DNA]</scope>
    <source>
        <strain>K12 / MC4100 / BW2952</strain>
    </source>
</reference>
<keyword id="KW-0028">Amino-acid biosynthesis</keyword>
<keyword id="KW-0963">Cytoplasm</keyword>
<keyword id="KW-0238">DNA-binding</keyword>
<keyword id="KW-0486">Methionine biosynthesis</keyword>
<keyword id="KW-0678">Repressor</keyword>
<keyword id="KW-0804">Transcription</keyword>
<keyword id="KW-0805">Transcription regulation</keyword>
<sequence>MAEWSGEYISPYAEHGKKSEQVKKITVSIPLKVLKILTDERTRRQVNNLRHATNSELLCEAFLHAFTGQPLPDDADLRKERSDEIPEAAKEIMREMGINPETWEY</sequence>
<dbReference type="EMBL" id="CP001396">
    <property type="protein sequence ID" value="ACR62990.1"/>
    <property type="molecule type" value="Genomic_DNA"/>
</dbReference>
<dbReference type="RefSeq" id="WP_000852812.1">
    <property type="nucleotide sequence ID" value="NC_012759.1"/>
</dbReference>
<dbReference type="SMR" id="C5A0A5"/>
<dbReference type="GeneID" id="93777954"/>
<dbReference type="KEGG" id="ebw:BWG_3607"/>
<dbReference type="HOGENOM" id="CLU_142318_0_0_6"/>
<dbReference type="GO" id="GO:0005737">
    <property type="term" value="C:cytoplasm"/>
    <property type="evidence" value="ECO:0007669"/>
    <property type="project" value="UniProtKB-SubCell"/>
</dbReference>
<dbReference type="GO" id="GO:0003677">
    <property type="term" value="F:DNA binding"/>
    <property type="evidence" value="ECO:0007669"/>
    <property type="project" value="UniProtKB-KW"/>
</dbReference>
<dbReference type="GO" id="GO:0003700">
    <property type="term" value="F:DNA-binding transcription factor activity"/>
    <property type="evidence" value="ECO:0007669"/>
    <property type="project" value="InterPro"/>
</dbReference>
<dbReference type="GO" id="GO:0009086">
    <property type="term" value="P:methionine biosynthetic process"/>
    <property type="evidence" value="ECO:0007669"/>
    <property type="project" value="UniProtKB-UniRule"/>
</dbReference>
<dbReference type="GO" id="GO:0045892">
    <property type="term" value="P:negative regulation of DNA-templated transcription"/>
    <property type="evidence" value="ECO:0007669"/>
    <property type="project" value="UniProtKB-UniRule"/>
</dbReference>
<dbReference type="CDD" id="cd00490">
    <property type="entry name" value="Met_repressor_MetJ"/>
    <property type="match status" value="1"/>
</dbReference>
<dbReference type="FunFam" id="1.10.140.10:FF:000001">
    <property type="entry name" value="Met repressor"/>
    <property type="match status" value="1"/>
</dbReference>
<dbReference type="Gene3D" id="1.10.140.10">
    <property type="entry name" value="MET Apo-Repressor, subunit A"/>
    <property type="match status" value="1"/>
</dbReference>
<dbReference type="HAMAP" id="MF_00744">
    <property type="entry name" value="MetJ"/>
    <property type="match status" value="1"/>
</dbReference>
<dbReference type="InterPro" id="IPR002084">
    <property type="entry name" value="Met_repressor_MetJ"/>
</dbReference>
<dbReference type="InterPro" id="IPR023453">
    <property type="entry name" value="Met_repressor_MetJ_dom_sf"/>
</dbReference>
<dbReference type="InterPro" id="IPR010985">
    <property type="entry name" value="Ribbon_hlx_hlx"/>
</dbReference>
<dbReference type="NCBIfam" id="NF003622">
    <property type="entry name" value="PRK05264.1"/>
    <property type="match status" value="1"/>
</dbReference>
<dbReference type="Pfam" id="PF01340">
    <property type="entry name" value="MetJ"/>
    <property type="match status" value="1"/>
</dbReference>
<dbReference type="SUPFAM" id="SSF47598">
    <property type="entry name" value="Ribbon-helix-helix"/>
    <property type="match status" value="1"/>
</dbReference>
<comment type="function">
    <text evidence="1">This regulatory protein, when combined with SAM (S-adenosylmethionine) represses the expression of the methionine regulon and of enzymes involved in SAM synthesis.</text>
</comment>
<comment type="subunit">
    <text evidence="1">Homodimer.</text>
</comment>
<comment type="subcellular location">
    <subcellularLocation>
        <location evidence="1">Cytoplasm</location>
    </subcellularLocation>
</comment>
<comment type="domain">
    <text>Does not bind DNA by a helix-turn-helix motif.</text>
</comment>
<comment type="similarity">
    <text evidence="1">Belongs to the MetJ family.</text>
</comment>